<organism>
    <name type="scientific">Deinagkistrodon acutus</name>
    <name type="common">Hundred-pace snake</name>
    <name type="synonym">Agkistrodon acutus</name>
    <dbReference type="NCBI Taxonomy" id="36307"/>
    <lineage>
        <taxon>Eukaryota</taxon>
        <taxon>Metazoa</taxon>
        <taxon>Chordata</taxon>
        <taxon>Craniata</taxon>
        <taxon>Vertebrata</taxon>
        <taxon>Euteleostomi</taxon>
        <taxon>Lepidosauria</taxon>
        <taxon>Squamata</taxon>
        <taxon>Bifurcata</taxon>
        <taxon>Unidentata</taxon>
        <taxon>Episquamata</taxon>
        <taxon>Toxicofera</taxon>
        <taxon>Serpentes</taxon>
        <taxon>Colubroidea</taxon>
        <taxon>Viperidae</taxon>
        <taxon>Crotalinae</taxon>
        <taxon>Deinagkistrodon</taxon>
    </lineage>
</organism>
<name>NU4M_DEIAC</name>
<accession>P92623</accession>
<comment type="function">
    <text evidence="1">Core subunit of the mitochondrial membrane respiratory chain NADH dehydrogenase (Complex I) that is believed to belong to the minimal assembly required for catalysis. Complex I functions in the transfer of electrons from NADH to the respiratory chain. The immediate electron acceptor for the enzyme is believed to be ubiquinone (By similarity).</text>
</comment>
<comment type="catalytic activity">
    <reaction>
        <text>a ubiquinone + NADH + 5 H(+)(in) = a ubiquinol + NAD(+) + 4 H(+)(out)</text>
        <dbReference type="Rhea" id="RHEA:29091"/>
        <dbReference type="Rhea" id="RHEA-COMP:9565"/>
        <dbReference type="Rhea" id="RHEA-COMP:9566"/>
        <dbReference type="ChEBI" id="CHEBI:15378"/>
        <dbReference type="ChEBI" id="CHEBI:16389"/>
        <dbReference type="ChEBI" id="CHEBI:17976"/>
        <dbReference type="ChEBI" id="CHEBI:57540"/>
        <dbReference type="ChEBI" id="CHEBI:57945"/>
        <dbReference type="EC" id="7.1.1.2"/>
    </reaction>
</comment>
<comment type="subcellular location">
    <subcellularLocation>
        <location evidence="1">Mitochondrion membrane</location>
        <topology evidence="1">Multi-pass membrane protein</topology>
    </subcellularLocation>
</comment>
<comment type="similarity">
    <text evidence="3">Belongs to the complex I subunit 4 family.</text>
</comment>
<dbReference type="EC" id="7.1.1.2"/>
<dbReference type="EMBL" id="U41883">
    <property type="protein sequence ID" value="AAB46641.1"/>
    <property type="molecule type" value="Genomic_DNA"/>
</dbReference>
<dbReference type="SMR" id="P92623"/>
<dbReference type="GO" id="GO:0031966">
    <property type="term" value="C:mitochondrial membrane"/>
    <property type="evidence" value="ECO:0007669"/>
    <property type="project" value="UniProtKB-SubCell"/>
</dbReference>
<dbReference type="GO" id="GO:0008137">
    <property type="term" value="F:NADH dehydrogenase (ubiquinone) activity"/>
    <property type="evidence" value="ECO:0007669"/>
    <property type="project" value="UniProtKB-EC"/>
</dbReference>
<dbReference type="GO" id="GO:0048039">
    <property type="term" value="F:ubiquinone binding"/>
    <property type="evidence" value="ECO:0007669"/>
    <property type="project" value="TreeGrafter"/>
</dbReference>
<dbReference type="GO" id="GO:0042773">
    <property type="term" value="P:ATP synthesis coupled electron transport"/>
    <property type="evidence" value="ECO:0007669"/>
    <property type="project" value="InterPro"/>
</dbReference>
<dbReference type="GO" id="GO:0015990">
    <property type="term" value="P:electron transport coupled proton transport"/>
    <property type="evidence" value="ECO:0007669"/>
    <property type="project" value="TreeGrafter"/>
</dbReference>
<dbReference type="InterPro" id="IPR003918">
    <property type="entry name" value="NADH_UbQ_OxRdtase"/>
</dbReference>
<dbReference type="InterPro" id="IPR001750">
    <property type="entry name" value="ND/Mrp_TM"/>
</dbReference>
<dbReference type="PANTHER" id="PTHR43507">
    <property type="entry name" value="NADH-UBIQUINONE OXIDOREDUCTASE CHAIN 4"/>
    <property type="match status" value="1"/>
</dbReference>
<dbReference type="PANTHER" id="PTHR43507:SF20">
    <property type="entry name" value="NADH-UBIQUINONE OXIDOREDUCTASE CHAIN 4"/>
    <property type="match status" value="1"/>
</dbReference>
<dbReference type="Pfam" id="PF00361">
    <property type="entry name" value="Proton_antipo_M"/>
    <property type="match status" value="1"/>
</dbReference>
<feature type="chain" id="PRO_0000117878" description="NADH-ubiquinone oxidoreductase chain 4">
    <location>
        <begin position="1" status="less than"/>
        <end position="231" status="greater than"/>
    </location>
</feature>
<feature type="transmembrane region" description="Helical" evidence="2">
    <location>
        <begin position="1"/>
        <end position="21"/>
    </location>
</feature>
<feature type="transmembrane region" description="Helical" evidence="2">
    <location>
        <begin position="34"/>
        <end position="54"/>
    </location>
</feature>
<feature type="transmembrane region" description="Helical" evidence="2">
    <location>
        <begin position="63"/>
        <end position="85"/>
    </location>
</feature>
<feature type="transmembrane region" description="Helical" evidence="2">
    <location>
        <begin position="89"/>
        <end position="111"/>
    </location>
</feature>
<feature type="transmembrane region" description="Helical" evidence="2">
    <location>
        <begin position="128"/>
        <end position="148"/>
    </location>
</feature>
<feature type="transmembrane region" description="Helical" evidence="2">
    <location>
        <begin position="169"/>
        <end position="189"/>
    </location>
</feature>
<feature type="non-terminal residue">
    <location>
        <position position="1"/>
    </location>
</feature>
<feature type="non-terminal residue">
    <location>
        <position position="231"/>
    </location>
</feature>
<sequence>PIAGSMVLAAILLKLGGYGIIRMMQILPATKTDMFLPFIVLALWGAILANLTCLQQTDLKSLIAYSSISHMGLVVAAIIIQTPWGLSGAMALMIAHGFTSSALFCLANTTYERTHTRILILTRGFHNILPMTTTWWLFVNLMNIAIPPTMNFTSELLIMSTLFNWCPTTIIMLGLSMLITASYSLHMFLSTQMGPTPLNNQTEPTHSREHLLMALHVIPLMMISMKPELIT</sequence>
<keyword id="KW-0249">Electron transport</keyword>
<keyword id="KW-0472">Membrane</keyword>
<keyword id="KW-0496">Mitochondrion</keyword>
<keyword id="KW-0520">NAD</keyword>
<keyword id="KW-0679">Respiratory chain</keyword>
<keyword id="KW-1278">Translocase</keyword>
<keyword id="KW-0812">Transmembrane</keyword>
<keyword id="KW-1133">Transmembrane helix</keyword>
<keyword id="KW-0813">Transport</keyword>
<keyword id="KW-0830">Ubiquinone</keyword>
<protein>
    <recommendedName>
        <fullName>NADH-ubiquinone oxidoreductase chain 4</fullName>
        <ecNumber>7.1.1.2</ecNumber>
    </recommendedName>
    <alternativeName>
        <fullName>NADH dehydrogenase subunit 4</fullName>
    </alternativeName>
</protein>
<geneLocation type="mitochondrion"/>
<reference key="1">
    <citation type="journal article" date="1996" name="Copeia">
        <title>Crotaline intergeneric relationships based on mitochondrial DNA sequence data.</title>
        <authorList>
            <person name="Kraus F."/>
            <person name="Mink D.G."/>
            <person name="Brown W.M."/>
        </authorList>
    </citation>
    <scope>NUCLEOTIDE SEQUENCE [GENOMIC DNA]</scope>
</reference>
<evidence type="ECO:0000250" key="1"/>
<evidence type="ECO:0000255" key="2"/>
<evidence type="ECO:0000305" key="3"/>
<gene>
    <name type="primary">MT-ND4</name>
    <name type="synonym">MTND4</name>
    <name type="synonym">NADH4</name>
    <name type="synonym">ND4</name>
</gene>
<proteinExistence type="inferred from homology"/>